<feature type="chain" id="PRO_1000054835" description="Small ribosomal subunit protein uS15">
    <location>
        <begin position="1"/>
        <end position="88"/>
    </location>
</feature>
<proteinExistence type="inferred from homology"/>
<gene>
    <name evidence="1" type="primary">rpsO</name>
    <name type="ordered locus">Ppro_0967</name>
</gene>
<organism>
    <name type="scientific">Pelobacter propionicus (strain DSM 2379 / NBRC 103807 / OttBd1)</name>
    <dbReference type="NCBI Taxonomy" id="338966"/>
    <lineage>
        <taxon>Bacteria</taxon>
        <taxon>Pseudomonadati</taxon>
        <taxon>Thermodesulfobacteriota</taxon>
        <taxon>Desulfuromonadia</taxon>
        <taxon>Desulfuromonadales</taxon>
        <taxon>Desulfuromonadaceae</taxon>
        <taxon>Pelobacter</taxon>
    </lineage>
</organism>
<sequence length="88" mass="10391">MLATEKKQEIIKAFKKHDSDTGSPEVQIAILTERITYLTEHFKVHKKDHHSRRGLLKLVGQRRRLLDYLKGKEVARYKAVIERLGIRR</sequence>
<comment type="function">
    <text evidence="1">One of the primary rRNA binding proteins, it binds directly to 16S rRNA where it helps nucleate assembly of the platform of the 30S subunit by binding and bridging several RNA helices of the 16S rRNA.</text>
</comment>
<comment type="function">
    <text evidence="1">Forms an intersubunit bridge (bridge B4) with the 23S rRNA of the 50S subunit in the ribosome.</text>
</comment>
<comment type="subunit">
    <text evidence="1">Part of the 30S ribosomal subunit. Forms a bridge to the 50S subunit in the 70S ribosome, contacting the 23S rRNA.</text>
</comment>
<comment type="similarity">
    <text evidence="1">Belongs to the universal ribosomal protein uS15 family.</text>
</comment>
<evidence type="ECO:0000255" key="1">
    <source>
        <dbReference type="HAMAP-Rule" id="MF_01343"/>
    </source>
</evidence>
<evidence type="ECO:0000305" key="2"/>
<dbReference type="EMBL" id="CP000482">
    <property type="protein sequence ID" value="ABK98595.1"/>
    <property type="molecule type" value="Genomic_DNA"/>
</dbReference>
<dbReference type="RefSeq" id="WP_011734902.1">
    <property type="nucleotide sequence ID" value="NC_008609.1"/>
</dbReference>
<dbReference type="SMR" id="A1AMM5"/>
<dbReference type="STRING" id="338966.Ppro_0967"/>
<dbReference type="KEGG" id="ppd:Ppro_0967"/>
<dbReference type="eggNOG" id="COG0184">
    <property type="taxonomic scope" value="Bacteria"/>
</dbReference>
<dbReference type="HOGENOM" id="CLU_148518_0_0_7"/>
<dbReference type="OrthoDB" id="9799262at2"/>
<dbReference type="Proteomes" id="UP000006732">
    <property type="component" value="Chromosome"/>
</dbReference>
<dbReference type="GO" id="GO:0022627">
    <property type="term" value="C:cytosolic small ribosomal subunit"/>
    <property type="evidence" value="ECO:0007669"/>
    <property type="project" value="TreeGrafter"/>
</dbReference>
<dbReference type="GO" id="GO:0019843">
    <property type="term" value="F:rRNA binding"/>
    <property type="evidence" value="ECO:0007669"/>
    <property type="project" value="UniProtKB-UniRule"/>
</dbReference>
<dbReference type="GO" id="GO:0003735">
    <property type="term" value="F:structural constituent of ribosome"/>
    <property type="evidence" value="ECO:0007669"/>
    <property type="project" value="InterPro"/>
</dbReference>
<dbReference type="GO" id="GO:0006412">
    <property type="term" value="P:translation"/>
    <property type="evidence" value="ECO:0007669"/>
    <property type="project" value="UniProtKB-UniRule"/>
</dbReference>
<dbReference type="CDD" id="cd00353">
    <property type="entry name" value="Ribosomal_S15p_S13e"/>
    <property type="match status" value="1"/>
</dbReference>
<dbReference type="FunFam" id="1.10.287.10:FF:000002">
    <property type="entry name" value="30S ribosomal protein S15"/>
    <property type="match status" value="1"/>
</dbReference>
<dbReference type="Gene3D" id="6.10.250.3130">
    <property type="match status" value="1"/>
</dbReference>
<dbReference type="Gene3D" id="1.10.287.10">
    <property type="entry name" value="S15/NS1, RNA-binding"/>
    <property type="match status" value="1"/>
</dbReference>
<dbReference type="HAMAP" id="MF_01343_B">
    <property type="entry name" value="Ribosomal_uS15_B"/>
    <property type="match status" value="1"/>
</dbReference>
<dbReference type="InterPro" id="IPR000589">
    <property type="entry name" value="Ribosomal_uS15"/>
</dbReference>
<dbReference type="InterPro" id="IPR005290">
    <property type="entry name" value="Ribosomal_uS15_bac-type"/>
</dbReference>
<dbReference type="InterPro" id="IPR009068">
    <property type="entry name" value="uS15_NS1_RNA-bd_sf"/>
</dbReference>
<dbReference type="NCBIfam" id="TIGR00952">
    <property type="entry name" value="S15_bact"/>
    <property type="match status" value="1"/>
</dbReference>
<dbReference type="PANTHER" id="PTHR23321">
    <property type="entry name" value="RIBOSOMAL PROTEIN S15, BACTERIAL AND ORGANELLAR"/>
    <property type="match status" value="1"/>
</dbReference>
<dbReference type="PANTHER" id="PTHR23321:SF26">
    <property type="entry name" value="SMALL RIBOSOMAL SUBUNIT PROTEIN US15M"/>
    <property type="match status" value="1"/>
</dbReference>
<dbReference type="Pfam" id="PF00312">
    <property type="entry name" value="Ribosomal_S15"/>
    <property type="match status" value="1"/>
</dbReference>
<dbReference type="SMART" id="SM01387">
    <property type="entry name" value="Ribosomal_S15"/>
    <property type="match status" value="1"/>
</dbReference>
<dbReference type="SUPFAM" id="SSF47060">
    <property type="entry name" value="S15/NS1 RNA-binding domain"/>
    <property type="match status" value="1"/>
</dbReference>
<dbReference type="PROSITE" id="PS00362">
    <property type="entry name" value="RIBOSOMAL_S15"/>
    <property type="match status" value="1"/>
</dbReference>
<accession>A1AMM5</accession>
<keyword id="KW-1185">Reference proteome</keyword>
<keyword id="KW-0687">Ribonucleoprotein</keyword>
<keyword id="KW-0689">Ribosomal protein</keyword>
<keyword id="KW-0694">RNA-binding</keyword>
<keyword id="KW-0699">rRNA-binding</keyword>
<name>RS15_PELPD</name>
<protein>
    <recommendedName>
        <fullName evidence="1">Small ribosomal subunit protein uS15</fullName>
    </recommendedName>
    <alternativeName>
        <fullName evidence="2">30S ribosomal protein S15</fullName>
    </alternativeName>
</protein>
<reference key="1">
    <citation type="submission" date="2006-10" db="EMBL/GenBank/DDBJ databases">
        <title>Complete sequence of chromosome of Pelobacter propionicus DSM 2379.</title>
        <authorList>
            <consortium name="US DOE Joint Genome Institute"/>
            <person name="Copeland A."/>
            <person name="Lucas S."/>
            <person name="Lapidus A."/>
            <person name="Barry K."/>
            <person name="Detter J.C."/>
            <person name="Glavina del Rio T."/>
            <person name="Hammon N."/>
            <person name="Israni S."/>
            <person name="Dalin E."/>
            <person name="Tice H."/>
            <person name="Pitluck S."/>
            <person name="Saunders E."/>
            <person name="Brettin T."/>
            <person name="Bruce D."/>
            <person name="Han C."/>
            <person name="Tapia R."/>
            <person name="Schmutz J."/>
            <person name="Larimer F."/>
            <person name="Land M."/>
            <person name="Hauser L."/>
            <person name="Kyrpides N."/>
            <person name="Kim E."/>
            <person name="Lovley D."/>
            <person name="Richardson P."/>
        </authorList>
    </citation>
    <scope>NUCLEOTIDE SEQUENCE [LARGE SCALE GENOMIC DNA]</scope>
    <source>
        <strain>DSM 2379 / NBRC 103807 / OttBd1</strain>
    </source>
</reference>